<reference key="1">
    <citation type="journal article" date="1998" name="DNA Res.">
        <title>Prediction of the coding sequences of unidentified human genes. IX. The complete sequences of 100 new cDNA clones from brain which can code for large proteins in vitro.</title>
        <authorList>
            <person name="Nagase T."/>
            <person name="Ishikawa K."/>
            <person name="Miyajima N."/>
            <person name="Tanaka A."/>
            <person name="Kotani H."/>
            <person name="Nomura N."/>
            <person name="Ohara O."/>
        </authorList>
    </citation>
    <scope>NUCLEOTIDE SEQUENCE [LARGE SCALE MRNA] (ISOFORM 2)</scope>
    <scope>VARIANTS HIS-322 AND PRO-1087</scope>
    <source>
        <tissue>Brain</tissue>
    </source>
</reference>
<reference key="2">
    <citation type="journal article" date="2002" name="DNA Res.">
        <title>Construction of expression-ready cDNA clones for KIAA genes: manual curation of 330 KIAA cDNA clones.</title>
        <authorList>
            <person name="Nakajima D."/>
            <person name="Okazaki N."/>
            <person name="Yamakawa H."/>
            <person name="Kikuno R."/>
            <person name="Ohara O."/>
            <person name="Nagase T."/>
        </authorList>
    </citation>
    <scope>SEQUENCE REVISION</scope>
</reference>
<reference key="3">
    <citation type="journal article" date="2004" name="Nat. Genet.">
        <title>Complete sequencing and characterization of 21,243 full-length human cDNAs.</title>
        <authorList>
            <person name="Ota T."/>
            <person name="Suzuki Y."/>
            <person name="Nishikawa T."/>
            <person name="Otsuki T."/>
            <person name="Sugiyama T."/>
            <person name="Irie R."/>
            <person name="Wakamatsu A."/>
            <person name="Hayashi K."/>
            <person name="Sato H."/>
            <person name="Nagai K."/>
            <person name="Kimura K."/>
            <person name="Makita H."/>
            <person name="Sekine M."/>
            <person name="Obayashi M."/>
            <person name="Nishi T."/>
            <person name="Shibahara T."/>
            <person name="Tanaka T."/>
            <person name="Ishii S."/>
            <person name="Yamamoto J."/>
            <person name="Saito K."/>
            <person name="Kawai Y."/>
            <person name="Isono Y."/>
            <person name="Nakamura Y."/>
            <person name="Nagahari K."/>
            <person name="Murakami K."/>
            <person name="Yasuda T."/>
            <person name="Iwayanagi T."/>
            <person name="Wagatsuma M."/>
            <person name="Shiratori A."/>
            <person name="Sudo H."/>
            <person name="Hosoiri T."/>
            <person name="Kaku Y."/>
            <person name="Kodaira H."/>
            <person name="Kondo H."/>
            <person name="Sugawara M."/>
            <person name="Takahashi M."/>
            <person name="Kanda K."/>
            <person name="Yokoi T."/>
            <person name="Furuya T."/>
            <person name="Kikkawa E."/>
            <person name="Omura Y."/>
            <person name="Abe K."/>
            <person name="Kamihara K."/>
            <person name="Katsuta N."/>
            <person name="Sato K."/>
            <person name="Tanikawa M."/>
            <person name="Yamazaki M."/>
            <person name="Ninomiya K."/>
            <person name="Ishibashi T."/>
            <person name="Yamashita H."/>
            <person name="Murakawa K."/>
            <person name="Fujimori K."/>
            <person name="Tanai H."/>
            <person name="Kimata M."/>
            <person name="Watanabe M."/>
            <person name="Hiraoka S."/>
            <person name="Chiba Y."/>
            <person name="Ishida S."/>
            <person name="Ono Y."/>
            <person name="Takiguchi S."/>
            <person name="Watanabe S."/>
            <person name="Yosida M."/>
            <person name="Hotuta T."/>
            <person name="Kusano J."/>
            <person name="Kanehori K."/>
            <person name="Takahashi-Fujii A."/>
            <person name="Hara H."/>
            <person name="Tanase T.-O."/>
            <person name="Nomura Y."/>
            <person name="Togiya S."/>
            <person name="Komai F."/>
            <person name="Hara R."/>
            <person name="Takeuchi K."/>
            <person name="Arita M."/>
            <person name="Imose N."/>
            <person name="Musashino K."/>
            <person name="Yuuki H."/>
            <person name="Oshima A."/>
            <person name="Sasaki N."/>
            <person name="Aotsuka S."/>
            <person name="Yoshikawa Y."/>
            <person name="Matsunawa H."/>
            <person name="Ichihara T."/>
            <person name="Shiohata N."/>
            <person name="Sano S."/>
            <person name="Moriya S."/>
            <person name="Momiyama H."/>
            <person name="Satoh N."/>
            <person name="Takami S."/>
            <person name="Terashima Y."/>
            <person name="Suzuki O."/>
            <person name="Nakagawa S."/>
            <person name="Senoh A."/>
            <person name="Mizoguchi H."/>
            <person name="Goto Y."/>
            <person name="Shimizu F."/>
            <person name="Wakebe H."/>
            <person name="Hishigaki H."/>
            <person name="Watanabe T."/>
            <person name="Sugiyama A."/>
            <person name="Takemoto M."/>
            <person name="Kawakami B."/>
            <person name="Yamazaki M."/>
            <person name="Watanabe K."/>
            <person name="Kumagai A."/>
            <person name="Itakura S."/>
            <person name="Fukuzumi Y."/>
            <person name="Fujimori Y."/>
            <person name="Komiyama M."/>
            <person name="Tashiro H."/>
            <person name="Tanigami A."/>
            <person name="Fujiwara T."/>
            <person name="Ono T."/>
            <person name="Yamada K."/>
            <person name="Fujii Y."/>
            <person name="Ozaki K."/>
            <person name="Hirao M."/>
            <person name="Ohmori Y."/>
            <person name="Kawabata A."/>
            <person name="Hikiji T."/>
            <person name="Kobatake N."/>
            <person name="Inagaki H."/>
            <person name="Ikema Y."/>
            <person name="Okamoto S."/>
            <person name="Okitani R."/>
            <person name="Kawakami T."/>
            <person name="Noguchi S."/>
            <person name="Itoh T."/>
            <person name="Shigeta K."/>
            <person name="Senba T."/>
            <person name="Matsumura K."/>
            <person name="Nakajima Y."/>
            <person name="Mizuno T."/>
            <person name="Morinaga M."/>
            <person name="Sasaki M."/>
            <person name="Togashi T."/>
            <person name="Oyama M."/>
            <person name="Hata H."/>
            <person name="Watanabe M."/>
            <person name="Komatsu T."/>
            <person name="Mizushima-Sugano J."/>
            <person name="Satoh T."/>
            <person name="Shirai Y."/>
            <person name="Takahashi Y."/>
            <person name="Nakagawa K."/>
            <person name="Okumura K."/>
            <person name="Nagase T."/>
            <person name="Nomura N."/>
            <person name="Kikuchi H."/>
            <person name="Masuho Y."/>
            <person name="Yamashita R."/>
            <person name="Nakai K."/>
            <person name="Yada T."/>
            <person name="Nakamura Y."/>
            <person name="Ohara O."/>
            <person name="Isogai T."/>
            <person name="Sugano S."/>
        </authorList>
    </citation>
    <scope>NUCLEOTIDE SEQUENCE [LARGE SCALE MRNA] (ISOFORMS 1; 9 AND 10)</scope>
    <scope>VARIANTS HIS-322; GLN-549 AND PRO-1087</scope>
    <source>
        <tissue>Cerebellum</tissue>
        <tissue>Testis</tissue>
        <tissue>Thymus</tissue>
    </source>
</reference>
<reference key="4">
    <citation type="journal article" date="1999" name="Nature">
        <title>The DNA sequence of human chromosome 22.</title>
        <authorList>
            <person name="Dunham I."/>
            <person name="Hunt A.R."/>
            <person name="Collins J.E."/>
            <person name="Bruskiewich R."/>
            <person name="Beare D.M."/>
            <person name="Clamp M."/>
            <person name="Smink L.J."/>
            <person name="Ainscough R."/>
            <person name="Almeida J.P."/>
            <person name="Babbage A.K."/>
            <person name="Bagguley C."/>
            <person name="Bailey J."/>
            <person name="Barlow K.F."/>
            <person name="Bates K.N."/>
            <person name="Beasley O.P."/>
            <person name="Bird C.P."/>
            <person name="Blakey S.E."/>
            <person name="Bridgeman A.M."/>
            <person name="Buck D."/>
            <person name="Burgess J."/>
            <person name="Burrill W.D."/>
            <person name="Burton J."/>
            <person name="Carder C."/>
            <person name="Carter N.P."/>
            <person name="Chen Y."/>
            <person name="Clark G."/>
            <person name="Clegg S.M."/>
            <person name="Cobley V.E."/>
            <person name="Cole C.G."/>
            <person name="Collier R.E."/>
            <person name="Connor R."/>
            <person name="Conroy D."/>
            <person name="Corby N.R."/>
            <person name="Coville G.J."/>
            <person name="Cox A.V."/>
            <person name="Davis J."/>
            <person name="Dawson E."/>
            <person name="Dhami P.D."/>
            <person name="Dockree C."/>
            <person name="Dodsworth S.J."/>
            <person name="Durbin R.M."/>
            <person name="Ellington A.G."/>
            <person name="Evans K.L."/>
            <person name="Fey J.M."/>
            <person name="Fleming K."/>
            <person name="French L."/>
            <person name="Garner A.A."/>
            <person name="Gilbert J.G.R."/>
            <person name="Goward M.E."/>
            <person name="Grafham D.V."/>
            <person name="Griffiths M.N.D."/>
            <person name="Hall C."/>
            <person name="Hall R.E."/>
            <person name="Hall-Tamlyn G."/>
            <person name="Heathcott R.W."/>
            <person name="Ho S."/>
            <person name="Holmes S."/>
            <person name="Hunt S.E."/>
            <person name="Jones M.C."/>
            <person name="Kershaw J."/>
            <person name="Kimberley A.M."/>
            <person name="King A."/>
            <person name="Laird G.K."/>
            <person name="Langford C.F."/>
            <person name="Leversha M.A."/>
            <person name="Lloyd C."/>
            <person name="Lloyd D.M."/>
            <person name="Martyn I.D."/>
            <person name="Mashreghi-Mohammadi M."/>
            <person name="Matthews L.H."/>
            <person name="Mccann O.T."/>
            <person name="Mcclay J."/>
            <person name="Mclaren S."/>
            <person name="McMurray A.A."/>
            <person name="Milne S.A."/>
            <person name="Mortimore B.J."/>
            <person name="Odell C.N."/>
            <person name="Pavitt R."/>
            <person name="Pearce A.V."/>
            <person name="Pearson D."/>
            <person name="Phillimore B.J.C.T."/>
            <person name="Phillips S.H."/>
            <person name="Plumb R.W."/>
            <person name="Ramsay H."/>
            <person name="Ramsey Y."/>
            <person name="Rogers L."/>
            <person name="Ross M.T."/>
            <person name="Scott C.E."/>
            <person name="Sehra H.K."/>
            <person name="Skuce C.D."/>
            <person name="Smalley S."/>
            <person name="Smith M.L."/>
            <person name="Soderlund C."/>
            <person name="Spragon L."/>
            <person name="Steward C.A."/>
            <person name="Sulston J.E."/>
            <person name="Swann R.M."/>
            <person name="Vaudin M."/>
            <person name="Wall M."/>
            <person name="Wallis J.M."/>
            <person name="Whiteley M.N."/>
            <person name="Willey D.L."/>
            <person name="Williams L."/>
            <person name="Williams S.A."/>
            <person name="Williamson H."/>
            <person name="Wilmer T.E."/>
            <person name="Wilming L."/>
            <person name="Wright C.L."/>
            <person name="Hubbard T."/>
            <person name="Bentley D.R."/>
            <person name="Beck S."/>
            <person name="Rogers J."/>
            <person name="Shimizu N."/>
            <person name="Minoshima S."/>
            <person name="Kawasaki K."/>
            <person name="Sasaki T."/>
            <person name="Asakawa S."/>
            <person name="Kudoh J."/>
            <person name="Shintani A."/>
            <person name="Shibuya K."/>
            <person name="Yoshizaki Y."/>
            <person name="Aoki N."/>
            <person name="Mitsuyama S."/>
            <person name="Roe B.A."/>
            <person name="Chen F."/>
            <person name="Chu L."/>
            <person name="Crabtree J."/>
            <person name="Deschamps S."/>
            <person name="Do A."/>
            <person name="Do T."/>
            <person name="Dorman A."/>
            <person name="Fang F."/>
            <person name="Fu Y."/>
            <person name="Hu P."/>
            <person name="Hua A."/>
            <person name="Kenton S."/>
            <person name="Lai H."/>
            <person name="Lao H.I."/>
            <person name="Lewis J."/>
            <person name="Lewis S."/>
            <person name="Lin S.-P."/>
            <person name="Loh P."/>
            <person name="Malaj E."/>
            <person name="Nguyen T."/>
            <person name="Pan H."/>
            <person name="Phan S."/>
            <person name="Qi S."/>
            <person name="Qian Y."/>
            <person name="Ray L."/>
            <person name="Ren Q."/>
            <person name="Shaull S."/>
            <person name="Sloan D."/>
            <person name="Song L."/>
            <person name="Wang Q."/>
            <person name="Wang Y."/>
            <person name="Wang Z."/>
            <person name="White J."/>
            <person name="Willingham D."/>
            <person name="Wu H."/>
            <person name="Yao Z."/>
            <person name="Zhan M."/>
            <person name="Zhang G."/>
            <person name="Chissoe S."/>
            <person name="Murray J."/>
            <person name="Miller N."/>
            <person name="Minx P."/>
            <person name="Fulton R."/>
            <person name="Johnson D."/>
            <person name="Bemis G."/>
            <person name="Bentley D."/>
            <person name="Bradshaw H."/>
            <person name="Bourne S."/>
            <person name="Cordes M."/>
            <person name="Du Z."/>
            <person name="Fulton L."/>
            <person name="Goela D."/>
            <person name="Graves T."/>
            <person name="Hawkins J."/>
            <person name="Hinds K."/>
            <person name="Kemp K."/>
            <person name="Latreille P."/>
            <person name="Layman D."/>
            <person name="Ozersky P."/>
            <person name="Rohlfing T."/>
            <person name="Scheet P."/>
            <person name="Walker C."/>
            <person name="Wamsley A."/>
            <person name="Wohldmann P."/>
            <person name="Pepin K."/>
            <person name="Nelson J."/>
            <person name="Korf I."/>
            <person name="Bedell J.A."/>
            <person name="Hillier L.W."/>
            <person name="Mardis E."/>
            <person name="Waterston R."/>
            <person name="Wilson R."/>
            <person name="Emanuel B.S."/>
            <person name="Shaikh T."/>
            <person name="Kurahashi H."/>
            <person name="Saitta S."/>
            <person name="Budarf M.L."/>
            <person name="McDermid H.E."/>
            <person name="Johnson A."/>
            <person name="Wong A.C.C."/>
            <person name="Morrow B.E."/>
            <person name="Edelmann L."/>
            <person name="Kim U.J."/>
            <person name="Shizuya H."/>
            <person name="Simon M.I."/>
            <person name="Dumanski J.P."/>
            <person name="Peyrard M."/>
            <person name="Kedra D."/>
            <person name="Seroussi E."/>
            <person name="Fransson I."/>
            <person name="Tapia I."/>
            <person name="Bruder C.E."/>
            <person name="O'Brien K.P."/>
            <person name="Wilkinson P."/>
            <person name="Bodenteich A."/>
            <person name="Hartman K."/>
            <person name="Hu X."/>
            <person name="Khan A.S."/>
            <person name="Lane L."/>
            <person name="Tilahun Y."/>
            <person name="Wright H."/>
        </authorList>
    </citation>
    <scope>NUCLEOTIDE SEQUENCE [LARGE SCALE GENOMIC DNA]</scope>
</reference>
<reference key="5">
    <citation type="journal article" date="2004" name="Genome Res.">
        <title>The status, quality, and expansion of the NIH full-length cDNA project: the Mammalian Gene Collection (MGC).</title>
        <authorList>
            <consortium name="The MGC Project Team"/>
        </authorList>
    </citation>
    <scope>NUCLEOTIDE SEQUENCE [LARGE SCALE MRNA] (ISOFORMS 3; 4 AND 5)</scope>
    <scope>VARIANTS HIS-322; GLN-549 AND PRO-1087</scope>
    <source>
        <tissue>Brain</tissue>
        <tissue>Lung</tissue>
        <tissue>PNS</tissue>
        <tissue>Uterus</tissue>
    </source>
</reference>
<reference key="6">
    <citation type="journal article" date="2003" name="J. Cell Biol.">
        <title>Sfi1p has conserved centrin-binding sites and an essential function in budding yeast spindle pole body duplication.</title>
        <authorList>
            <person name="Kilmartin J.V."/>
        </authorList>
    </citation>
    <scope>SUBCELLULAR LOCATION</scope>
    <scope>INTERACTION WITH CETN2</scope>
    <scope>DOMAIN</scope>
</reference>
<reference key="7">
    <citation type="journal article" date="2006" name="FEBS J.">
        <title>Binding of human centrin 2 to the centrosomal protein hSfi1.</title>
        <authorList>
            <person name="Martinez-Sanz J."/>
            <person name="Yang A."/>
            <person name="Blouquit Y."/>
            <person name="Duchambon P."/>
            <person name="Assairi L."/>
            <person name="Craescu C.T."/>
        </authorList>
    </citation>
    <scope>FUNCTION</scope>
    <scope>INTERACTION WITH CETN2</scope>
    <scope>SUBCELLULAR LOCATION</scope>
</reference>
<reference key="8">
    <citation type="journal article" date="2023" name="J. Cell Biol.">
        <title>CCDC15 localizes to the centriole inner scaffold and controls centriole length and integrity.</title>
        <authorList>
            <person name="Arslanhan M.D."/>
            <person name="Cengiz-Emek S."/>
            <person name="Odabasi E."/>
            <person name="Steib E."/>
            <person name="Hamel V."/>
            <person name="Guichard P."/>
            <person name="Firat-Karalar E.N."/>
        </authorList>
    </citation>
    <scope>SUBCELLULAR LOCATION</scope>
</reference>
<comment type="function">
    <text evidence="5">Plays a role in the dynamic structure of centrosome-associated contractile fibers via its interaction with CETN2.</text>
</comment>
<comment type="subunit">
    <text evidence="2 5">Interacts with CETN2 (via C-terminus).</text>
</comment>
<comment type="interaction">
    <interactant intactId="EBI-743371">
        <id>A8K8P3</id>
    </interactant>
    <interactant intactId="EBI-1789926">
        <id>P41208</id>
        <label>CETN2</label>
    </interactant>
    <organismsDiffer>false</organismsDiffer>
    <experiments>5</experiments>
</comment>
<comment type="interaction">
    <interactant intactId="EBI-743371">
        <id>A8K8P3</id>
    </interactant>
    <interactant intactId="EBI-357253">
        <id>P62136</id>
        <label>PPP1CA</label>
    </interactant>
    <organismsDiffer>false</organismsDiffer>
    <experiments>2</experiments>
</comment>
<comment type="interaction">
    <interactant intactId="EBI-10321817">
        <id>A8K8P3-4</id>
    </interactant>
    <interactant intactId="EBI-77889">
        <id>Q9UI95</id>
        <label>MAD2L2</label>
    </interactant>
    <organismsDiffer>false</organismsDiffer>
    <experiments>3</experiments>
</comment>
<comment type="subcellular location">
    <subcellularLocation>
        <location evidence="2 5 6">Cytoplasm</location>
        <location evidence="2 5 6">Cytoskeleton</location>
        <location evidence="2 5 6">Microtubule organizing center</location>
        <location evidence="2 5 6">Centrosome</location>
        <location evidence="2 5 6">Centriole</location>
    </subcellularLocation>
    <text evidence="6">Localized close to the centriole. Localizes to the distal end of centrioles.</text>
</comment>
<comment type="alternative products">
    <event type="alternative splicing"/>
    <isoform>
        <id>A8K8P3-1</id>
        <name>1</name>
        <sequence type="displayed"/>
    </isoform>
    <isoform>
        <id>A8K8P3-2</id>
        <name>2</name>
        <sequence type="described" ref="VSP_033702"/>
    </isoform>
    <isoform>
        <id>A8K8P3-3</id>
        <name>3</name>
        <sequence type="described" ref="VSP_033699"/>
    </isoform>
    <isoform>
        <id>A8K8P3-4</id>
        <name>4</name>
        <sequence type="described" ref="VSP_033699 VSP_033701 VSP_033708"/>
    </isoform>
    <isoform>
        <id>A8K8P3-5</id>
        <name>5</name>
        <sequence type="described" ref="VSP_033700 VSP_033703"/>
    </isoform>
    <isoform>
        <id>A8K8P3-9</id>
        <name>9</name>
        <sequence type="described" ref="VSP_033700 VSP_033702"/>
    </isoform>
    <isoform>
        <id>A8K8P3-10</id>
        <name>10</name>
        <sequence type="described" ref="VSP_033699 VSP_038325"/>
    </isoform>
</comment>
<comment type="domain">
    <text evidence="2">CETN2-binding regions contains a conserved Trp residue in their C-terminal ends, which seems critical for interaction with CETN2.</text>
</comment>
<comment type="similarity">
    <text evidence="11">Belongs to the SFI1 family.</text>
</comment>
<comment type="caution">
    <text evidence="11">It is uncertain whether Met-1 or Met-24 is the initiator.</text>
</comment>
<comment type="sequence caution" evidence="11">
    <conflict type="erroneous initiation">
        <sequence resource="EMBL-CDS" id="AAI10815"/>
    </conflict>
</comment>
<comment type="sequence caution" evidence="11">
    <conflict type="erroneous initiation">
        <sequence resource="EMBL-CDS" id="AAI29927"/>
    </conflict>
</comment>
<comment type="sequence caution" evidence="11">
    <conflict type="erroneous initiation">
        <sequence resource="EMBL-CDS" id="BAA25468"/>
    </conflict>
</comment>
<sequence length="1242" mass="147664">MKNLLTEKCISSHNFHQKVIKQRMEKKVDSRYFKDGAVKKPYSAKTLSNKKSSASFGIRRELPSTSHLVQYRGTHTCTRQGRLRELRIRCVARKFLYLWIRMTFGRVFPSKARFYYEQRLLRKVFEEWKEEWWVFQHEWKLCVRADCHYRYYLYNLMFQTWKTYVRQQQEMRNKYIRAEVHDAKQKMRQAWKSWLIYVVVRRTKLQMQTTALEFRQRIILRVWWSTWRQRLGQVRVSRALHASALKHRALSLQVQAWSQWREQLLYVQKEKQKVVSAVKHHQHWQKRRFLKAWLEYLQVRRVKRQQNEMAERFHHVTVLQIYFCDWQQAWERRESLYAHHAQVEKLARKMALRRAFTHWKHYMLLCAEEAAQFEMAEEHHRHSQLYFCFRALKDNVTHAHLQQIRRNLAHQQHGVTLLHRFWNLWRSQIEQKKERELLPLLHAAWDHYRIALLCKCIELWLQYTQKRRYKQLLQARADGHFQQRALPAAFHTWNRLWRWRHQENVLSARATRFHRETLEKQVFSLWRQKMFQHRENRLAERMAILHAERQLLYRSWFMWHQQAAARHQEQEWQTVACAHHRHGRLKKAFCLWRESAQGLRTERTGRVRAAEFHMAQLLRWAWSQWRECLALRGAERQKLMRADLHHQHSVLHRALQAWVTYQGRVRSILREVAARESQHNRQLLRGALRRWKENTMARVDEAKKTFQASTHYRRTICSKVLVQWREAVSVQMYYRQQEDCAIWEAQKVLDRGCLRTWFQRWWDCSRRSAQQRLQLERAVQHHHRQLLLEGLARWKTHHLQCVRKRLLHRQSTQLLAQRLSRTCFRQWRQQLAARRQEQRATVRALWFWAFSLQAKVWATWLAFVLERRRKKARLQWALQAYQGQLLQEGATRLLRFAASMKASRQQLQAQQQVQAAHSLHRAVRRCATLWKQKVLGRGGKPQPLAAIAPSRKVTFEGPLLNRIAAGAGDGTLETKRPQASRPLGALGRLAAEEPHALELNTAHSARKQPRRPHFLLEPAQSQRPQKPQEHGLGMAQPAAPSLTRPFLAEAPTALVPHSPLPGALSSAPGPKQPPTASTGPELLLLPLSSFMPCGAAAPARVSAQRATPRDKPPVPSSLASVPDPHLLLPGDFSATRAGPGLSTAGSLDLEAELEEIQQQLLHYQTTKQNLWSCRRQASSLRRWLELNREEPGPEDQEVEQQVQKELEQVEMQIQLLAEELQAQRQPIGACVARIQALRQALC</sequence>
<gene>
    <name type="primary">SFI1</name>
    <name type="synonym">KIAA0542</name>
</gene>
<proteinExistence type="evidence at protein level"/>
<name>SFI1_HUMAN</name>
<dbReference type="EMBL" id="AB011114">
    <property type="protein sequence ID" value="BAA25468.2"/>
    <property type="status" value="ALT_INIT"/>
    <property type="molecule type" value="mRNA"/>
</dbReference>
<dbReference type="EMBL" id="AK292408">
    <property type="protein sequence ID" value="BAF85097.1"/>
    <property type="molecule type" value="mRNA"/>
</dbReference>
<dbReference type="EMBL" id="AK293987">
    <property type="protein sequence ID" value="BAH11642.1"/>
    <property type="molecule type" value="mRNA"/>
</dbReference>
<dbReference type="EMBL" id="AK303362">
    <property type="protein sequence ID" value="BAH13949.1"/>
    <property type="molecule type" value="mRNA"/>
</dbReference>
<dbReference type="EMBL" id="AL096701">
    <property type="status" value="NOT_ANNOTATED_CDS"/>
    <property type="molecule type" value="Genomic_DNA"/>
</dbReference>
<dbReference type="EMBL" id="AL096768">
    <property type="status" value="NOT_ANNOTATED_CDS"/>
    <property type="molecule type" value="Genomic_DNA"/>
</dbReference>
<dbReference type="EMBL" id="AL109802">
    <property type="status" value="NOT_ANNOTATED_CDS"/>
    <property type="molecule type" value="Genomic_DNA"/>
</dbReference>
<dbReference type="EMBL" id="BC021576">
    <property type="protein sequence ID" value="AAH21576.1"/>
    <property type="molecule type" value="mRNA"/>
</dbReference>
<dbReference type="EMBL" id="BC110814">
    <property type="protein sequence ID" value="AAI10815.1"/>
    <property type="status" value="ALT_INIT"/>
    <property type="molecule type" value="mRNA"/>
</dbReference>
<dbReference type="EMBL" id="BC129926">
    <property type="protein sequence ID" value="AAI29927.1"/>
    <property type="status" value="ALT_INIT"/>
    <property type="molecule type" value="mRNA"/>
</dbReference>
<dbReference type="EMBL" id="BC129945">
    <property type="protein sequence ID" value="AAI29946.1"/>
    <property type="molecule type" value="mRNA"/>
</dbReference>
<dbReference type="CCDS" id="CCDS43004.1">
    <molecule id="A8K8P3-1"/>
</dbReference>
<dbReference type="CCDS" id="CCDS43005.1">
    <molecule id="A8K8P3-2"/>
</dbReference>
<dbReference type="CCDS" id="CCDS58803.1">
    <molecule id="A8K8P3-9"/>
</dbReference>
<dbReference type="CCDS" id="CCDS58804.1">
    <molecule id="A8K8P3-3"/>
</dbReference>
<dbReference type="PIR" id="T00322">
    <property type="entry name" value="T00322"/>
</dbReference>
<dbReference type="RefSeq" id="NP_001007468.1">
    <molecule id="A8K8P3-1"/>
    <property type="nucleotide sequence ID" value="NM_001007467.3"/>
</dbReference>
<dbReference type="RefSeq" id="NP_001245254.1">
    <molecule id="A8K8P3-9"/>
    <property type="nucleotide sequence ID" value="NM_001258325.1"/>
</dbReference>
<dbReference type="RefSeq" id="NP_001245255.1">
    <molecule id="A8K8P3-3"/>
    <property type="nucleotide sequence ID" value="NM_001258326.2"/>
</dbReference>
<dbReference type="RefSeq" id="NP_001245256.1">
    <molecule id="A8K8P3-10"/>
    <property type="nucleotide sequence ID" value="NM_001258327.2"/>
</dbReference>
<dbReference type="RefSeq" id="NP_055590.2">
    <molecule id="A8K8P3-2"/>
    <property type="nucleotide sequence ID" value="NM_014775.4"/>
</dbReference>
<dbReference type="RefSeq" id="XP_006724453.1">
    <property type="nucleotide sequence ID" value="XM_006724390.2"/>
</dbReference>
<dbReference type="RefSeq" id="XP_016884640.1">
    <property type="nucleotide sequence ID" value="XM_017029151.1"/>
</dbReference>
<dbReference type="RefSeq" id="XP_016884643.1">
    <property type="nucleotide sequence ID" value="XM_017029154.1"/>
</dbReference>
<dbReference type="PDB" id="2K2I">
    <property type="method" value="NMR"/>
    <property type="chains" value="B=641-660"/>
</dbReference>
<dbReference type="PDBsum" id="2K2I"/>
<dbReference type="BMRB" id="A8K8P3"/>
<dbReference type="SMR" id="A8K8P3"/>
<dbReference type="BioGRID" id="115153">
    <property type="interactions" value="32"/>
</dbReference>
<dbReference type="CORUM" id="A8K8P3"/>
<dbReference type="FunCoup" id="A8K8P3">
    <property type="interactions" value="1119"/>
</dbReference>
<dbReference type="IntAct" id="A8K8P3">
    <property type="interactions" value="22"/>
</dbReference>
<dbReference type="MINT" id="A8K8P3"/>
<dbReference type="STRING" id="9606.ENSP00000383145"/>
<dbReference type="iPTMnet" id="A8K8P3"/>
<dbReference type="PhosphoSitePlus" id="A8K8P3"/>
<dbReference type="BioMuta" id="SFI1"/>
<dbReference type="jPOST" id="A8K8P3"/>
<dbReference type="MassIVE" id="A8K8P3"/>
<dbReference type="PaxDb" id="9606-ENSP00000383145"/>
<dbReference type="PeptideAtlas" id="A8K8P3"/>
<dbReference type="ProteomicsDB" id="1880">
    <molecule id="A8K8P3-1"/>
</dbReference>
<dbReference type="ProteomicsDB" id="1881">
    <molecule id="A8K8P3-10"/>
</dbReference>
<dbReference type="ProteomicsDB" id="1882">
    <molecule id="A8K8P3-2"/>
</dbReference>
<dbReference type="ProteomicsDB" id="1883">
    <molecule id="A8K8P3-3"/>
</dbReference>
<dbReference type="ProteomicsDB" id="1884">
    <molecule id="A8K8P3-4"/>
</dbReference>
<dbReference type="ProteomicsDB" id="1885">
    <molecule id="A8K8P3-5"/>
</dbReference>
<dbReference type="ProteomicsDB" id="1886">
    <molecule id="A8K8P3-9"/>
</dbReference>
<dbReference type="Antibodypedia" id="45464">
    <property type="antibodies" value="54 antibodies from 16 providers"/>
</dbReference>
<dbReference type="DNASU" id="9814"/>
<dbReference type="Ensembl" id="ENST00000400288.7">
    <molecule id="A8K8P3-1"/>
    <property type="protein sequence ID" value="ENSP00000383145.2"/>
    <property type="gene ID" value="ENSG00000198089.16"/>
</dbReference>
<dbReference type="Ensembl" id="ENST00000400289.5">
    <molecule id="A8K8P3-3"/>
    <property type="protein sequence ID" value="ENSP00000383146.1"/>
    <property type="gene ID" value="ENSG00000198089.16"/>
</dbReference>
<dbReference type="Ensembl" id="ENST00000432498.5">
    <molecule id="A8K8P3-2"/>
    <property type="protein sequence ID" value="ENSP00000402679.1"/>
    <property type="gene ID" value="ENSG00000198089.16"/>
</dbReference>
<dbReference type="Ensembl" id="ENST00000540643.5">
    <molecule id="A8K8P3-9"/>
    <property type="protein sequence ID" value="ENSP00000443025.1"/>
    <property type="gene ID" value="ENSG00000198089.16"/>
</dbReference>
<dbReference type="GeneID" id="9814"/>
<dbReference type="KEGG" id="hsa:9814"/>
<dbReference type="MANE-Select" id="ENST00000400288.7">
    <property type="protein sequence ID" value="ENSP00000383145.2"/>
    <property type="RefSeq nucleotide sequence ID" value="NM_001007467.3"/>
    <property type="RefSeq protein sequence ID" value="NP_001007468.1"/>
</dbReference>
<dbReference type="UCSC" id="uc003ale.5">
    <molecule id="A8K8P3-1"/>
    <property type="organism name" value="human"/>
</dbReference>
<dbReference type="AGR" id="HGNC:29064"/>
<dbReference type="CTD" id="9814"/>
<dbReference type="DisGeNET" id="9814"/>
<dbReference type="GeneCards" id="SFI1"/>
<dbReference type="HGNC" id="HGNC:29064">
    <property type="gene designation" value="SFI1"/>
</dbReference>
<dbReference type="HPA" id="ENSG00000198089">
    <property type="expression patterns" value="Tissue enhanced (brain)"/>
</dbReference>
<dbReference type="MIM" id="612765">
    <property type="type" value="gene"/>
</dbReference>
<dbReference type="neXtProt" id="NX_A8K8P3"/>
<dbReference type="OpenTargets" id="ENSG00000198089"/>
<dbReference type="PharmGKB" id="PA142670930"/>
<dbReference type="VEuPathDB" id="HostDB:ENSG00000198089"/>
<dbReference type="eggNOG" id="KOG4775">
    <property type="taxonomic scope" value="Eukaryota"/>
</dbReference>
<dbReference type="GeneTree" id="ENSGT00940000154110"/>
<dbReference type="HOGENOM" id="CLU_007965_0_0_1"/>
<dbReference type="InParanoid" id="A8K8P3"/>
<dbReference type="OMA" id="RCENNEE"/>
<dbReference type="OrthoDB" id="195843at2759"/>
<dbReference type="PAN-GO" id="A8K8P3">
    <property type="GO annotations" value="1 GO annotation based on evolutionary models"/>
</dbReference>
<dbReference type="PhylomeDB" id="A8K8P3"/>
<dbReference type="TreeFam" id="TF328940"/>
<dbReference type="PathwayCommons" id="A8K8P3"/>
<dbReference type="Reactome" id="R-HSA-2565942">
    <property type="pathway name" value="Regulation of PLK1 Activity at G2/M Transition"/>
</dbReference>
<dbReference type="Reactome" id="R-HSA-380259">
    <property type="pathway name" value="Loss of Nlp from mitotic centrosomes"/>
</dbReference>
<dbReference type="Reactome" id="R-HSA-380270">
    <property type="pathway name" value="Recruitment of mitotic centrosome proteins and complexes"/>
</dbReference>
<dbReference type="Reactome" id="R-HSA-380284">
    <property type="pathway name" value="Loss of proteins required for interphase microtubule organization from the centrosome"/>
</dbReference>
<dbReference type="Reactome" id="R-HSA-380320">
    <property type="pathway name" value="Recruitment of NuMA to mitotic centrosomes"/>
</dbReference>
<dbReference type="Reactome" id="R-HSA-5620912">
    <property type="pathway name" value="Anchoring of the basal body to the plasma membrane"/>
</dbReference>
<dbReference type="Reactome" id="R-HSA-8854518">
    <property type="pathway name" value="AURKA Activation by TPX2"/>
</dbReference>
<dbReference type="SignaLink" id="A8K8P3"/>
<dbReference type="BioGRID-ORCS" id="9814">
    <property type="hits" value="9 hits in 1161 CRISPR screens"/>
</dbReference>
<dbReference type="CD-CODE" id="8C2F96ED">
    <property type="entry name" value="Centrosome"/>
</dbReference>
<dbReference type="ChiTaRS" id="SFI1">
    <property type="organism name" value="human"/>
</dbReference>
<dbReference type="GenomeRNAi" id="9814"/>
<dbReference type="Pharos" id="A8K8P3">
    <property type="development level" value="Tdark"/>
</dbReference>
<dbReference type="PRO" id="PR:A8K8P3"/>
<dbReference type="Proteomes" id="UP000005640">
    <property type="component" value="Chromosome 22"/>
</dbReference>
<dbReference type="RNAct" id="A8K8P3">
    <property type="molecule type" value="protein"/>
</dbReference>
<dbReference type="Bgee" id="ENSG00000198089">
    <property type="expression patterns" value="Expressed in right hemisphere of cerebellum and 157 other cell types or tissues"/>
</dbReference>
<dbReference type="ExpressionAtlas" id="A8K8P3">
    <property type="expression patterns" value="baseline and differential"/>
</dbReference>
<dbReference type="GO" id="GO:0005814">
    <property type="term" value="C:centriole"/>
    <property type="evidence" value="ECO:0000314"/>
    <property type="project" value="UniProtKB"/>
</dbReference>
<dbReference type="GO" id="GO:0005829">
    <property type="term" value="C:cytosol"/>
    <property type="evidence" value="ECO:0000304"/>
    <property type="project" value="Reactome"/>
</dbReference>
<dbReference type="GO" id="GO:0019902">
    <property type="term" value="F:phosphatase binding"/>
    <property type="evidence" value="ECO:0000314"/>
    <property type="project" value="UniProtKB"/>
</dbReference>
<dbReference type="InterPro" id="IPR052270">
    <property type="entry name" value="CACF_protein"/>
</dbReference>
<dbReference type="PANTHER" id="PTHR22028:SF4">
    <property type="entry name" value="PROTEIN SFI1 HOMOLOG"/>
    <property type="match status" value="1"/>
</dbReference>
<dbReference type="PANTHER" id="PTHR22028">
    <property type="entry name" value="SFI1 SPINDLE BODY DOMAIN-CONTAINING PROTEIN-RELATED"/>
    <property type="match status" value="1"/>
</dbReference>
<organism>
    <name type="scientific">Homo sapiens</name>
    <name type="common">Human</name>
    <dbReference type="NCBI Taxonomy" id="9606"/>
    <lineage>
        <taxon>Eukaryota</taxon>
        <taxon>Metazoa</taxon>
        <taxon>Chordata</taxon>
        <taxon>Craniata</taxon>
        <taxon>Vertebrata</taxon>
        <taxon>Euteleostomi</taxon>
        <taxon>Mammalia</taxon>
        <taxon>Eutheria</taxon>
        <taxon>Euarchontoglires</taxon>
        <taxon>Primates</taxon>
        <taxon>Haplorrhini</taxon>
        <taxon>Catarrhini</taxon>
        <taxon>Hominidae</taxon>
        <taxon>Homo</taxon>
    </lineage>
</organism>
<keyword id="KW-0002">3D-structure</keyword>
<keyword id="KW-0025">Alternative splicing</keyword>
<keyword id="KW-0963">Cytoplasm</keyword>
<keyword id="KW-0206">Cytoskeleton</keyword>
<keyword id="KW-1267">Proteomics identification</keyword>
<keyword id="KW-1185">Reference proteome</keyword>
<keyword id="KW-0677">Repeat</keyword>
<evidence type="ECO:0000256" key="1">
    <source>
        <dbReference type="SAM" id="MobiDB-lite"/>
    </source>
</evidence>
<evidence type="ECO:0000269" key="2">
    <source>
    </source>
</evidence>
<evidence type="ECO:0000269" key="3">
    <source>
    </source>
</evidence>
<evidence type="ECO:0000269" key="4">
    <source>
    </source>
</evidence>
<evidence type="ECO:0000269" key="5">
    <source>
    </source>
</evidence>
<evidence type="ECO:0000269" key="6">
    <source>
    </source>
</evidence>
<evidence type="ECO:0000269" key="7">
    <source>
    </source>
</evidence>
<evidence type="ECO:0000303" key="8">
    <source>
    </source>
</evidence>
<evidence type="ECO:0000303" key="9">
    <source>
    </source>
</evidence>
<evidence type="ECO:0000303" key="10">
    <source>
    </source>
</evidence>
<evidence type="ECO:0000305" key="11"/>
<evidence type="ECO:0007829" key="12">
    <source>
        <dbReference type="PDB" id="2K2I"/>
    </source>
</evidence>
<feature type="chain" id="PRO_0000334621" description="Protein SFI1 homolog">
    <location>
        <begin position="1"/>
        <end position="1242"/>
    </location>
</feature>
<feature type="repeat" description="HAT 1">
    <location>
        <begin position="138"/>
        <end position="170"/>
    </location>
</feature>
<feature type="repeat" description="HAT 2">
    <location>
        <begin position="172"/>
        <end position="201"/>
    </location>
</feature>
<feature type="repeat" description="HAT 3">
    <location>
        <begin position="270"/>
        <end position="302"/>
    </location>
</feature>
<feature type="repeat" description="HAT 4">
    <location>
        <begin position="334"/>
        <end position="368"/>
    </location>
</feature>
<feature type="repeat" description="HAT 5">
    <location>
        <begin position="399"/>
        <end position="431"/>
    </location>
</feature>
<feature type="repeat" description="HAT 6">
    <location>
        <begin position="1148"/>
        <end position="1180"/>
    </location>
</feature>
<feature type="region of interest" description="Interaction with CETN2" evidence="5">
    <location>
        <begin position="111"/>
        <end position="130"/>
    </location>
</feature>
<feature type="region of interest" description="Interaction with CETN2" evidence="5">
    <location>
        <begin position="475"/>
        <end position="494"/>
    </location>
</feature>
<feature type="region of interest" description="Interaction with CETN2" evidence="5">
    <location>
        <begin position="641"/>
        <end position="660"/>
    </location>
</feature>
<feature type="region of interest" description="Disordered" evidence="1">
    <location>
        <begin position="1017"/>
        <end position="1038"/>
    </location>
</feature>
<feature type="region of interest" description="Disordered" evidence="1">
    <location>
        <begin position="1053"/>
        <end position="1081"/>
    </location>
</feature>
<feature type="region of interest" description="Disordered" evidence="1">
    <location>
        <begin position="1101"/>
        <end position="1122"/>
    </location>
</feature>
<feature type="splice variant" id="VSP_033699" description="In isoform 3, isoform 4 and isoform 10." evidence="8 9">
    <location>
        <begin position="31"/>
        <end position="112"/>
    </location>
</feature>
<feature type="splice variant" id="VSP_033700" description="In isoform 5 and isoform 9." evidence="8 9">
    <location>
        <begin position="89"/>
        <end position="112"/>
    </location>
</feature>
<feature type="splice variant" id="VSP_033701" description="In isoform 4." evidence="9">
    <location>
        <begin position="150"/>
        <end position="220"/>
    </location>
</feature>
<feature type="splice variant" id="VSP_033702" description="In isoform 2 and isoform 9." evidence="8 10">
    <location>
        <begin position="386"/>
        <end position="416"/>
    </location>
</feature>
<feature type="splice variant" id="VSP_033703" description="In isoform 5." evidence="9">
    <location>
        <begin position="678"/>
        <end position="904"/>
    </location>
</feature>
<feature type="splice variant" id="VSP_038325" description="In isoform 10." evidence="8">
    <location>
        <begin position="708"/>
        <end position="719"/>
    </location>
</feature>
<feature type="splice variant" id="VSP_033708" description="In isoform 4." evidence="9">
    <original>GSLDLEAELEEIQQQLLHYQTTKQNLWSCRRQASSLRRWLELNREEPGPEDQEVEQQVQKELEQVEMQIQLLAEELQAQRQPIGACVARIQALRQALC</original>
    <variation>AWTLRLNLRRSSSNYCTTRPPSRTSGPVGGKRAACAGGWS</variation>
    <location>
        <begin position="1145"/>
        <end position="1242"/>
    </location>
</feature>
<feature type="sequence variant" id="VAR_043439" description="In dbSNP:rs5749290.">
    <original>H</original>
    <variation>L</variation>
    <location>
        <position position="13"/>
    </location>
</feature>
<feature type="sequence variant" id="VAR_043440" description="In dbSNP:rs16989698.">
    <original>R</original>
    <variation>H</variation>
    <location>
        <position position="72"/>
    </location>
</feature>
<feature type="sequence variant" id="VAR_043441" description="In dbSNP:rs7511430.">
    <original>Q</original>
    <variation>H</variation>
    <location>
        <position position="167"/>
    </location>
</feature>
<feature type="sequence variant" id="VAR_043442" description="In dbSNP:rs5753700." evidence="3 4 7">
    <original>Y</original>
    <variation>H</variation>
    <location>
        <position position="322"/>
    </location>
</feature>
<feature type="sequence variant" id="VAR_043443" description="In dbSNP:rs16989291.">
    <original>W</original>
    <variation>R</variation>
    <location>
        <position position="330"/>
    </location>
</feature>
<feature type="sequence variant" id="VAR_043444" description="In dbSNP:rs2006771." evidence="3 4">
    <original>R</original>
    <variation>Q</variation>
    <location>
        <position position="549"/>
    </location>
</feature>
<feature type="sequence variant" id="VAR_062234" description="In dbSNP:rs9621295.">
    <original>R</original>
    <variation>H</variation>
    <location>
        <position position="760"/>
    </location>
</feature>
<feature type="sequence variant" id="VAR_043445" description="In dbSNP:rs12171042." evidence="3 4 7">
    <original>L</original>
    <variation>P</variation>
    <location>
        <position position="1087"/>
    </location>
</feature>
<feature type="sequence conflict" description="In Ref. 5; AAI10815." evidence="11" ref="5">
    <original>R</original>
    <variation>W</variation>
    <location>
        <position position="353"/>
    </location>
</feature>
<feature type="sequence conflict" description="In Ref. 5; AAI29927." evidence="11" ref="5">
    <original>W</original>
    <variation>R</variation>
    <location>
        <position position="622"/>
    </location>
</feature>
<feature type="helix" evidence="12">
    <location>
        <begin position="651"/>
        <end position="659"/>
    </location>
</feature>
<protein>
    <recommendedName>
        <fullName>Protein SFI1 homolog</fullName>
        <shortName>hSFI1</shortName>
    </recommendedName>
</protein>
<accession>A8K8P3</accession>
<accession>A1L373</accession>
<accession>A1L387</accession>
<accession>A2A2L2</accession>
<accession>B1AKL9</accession>
<accession>B5MDB7</accession>
<accession>B7Z1V6</accession>
<accession>B7Z8G3</accession>
<accession>B7ZBE2</accession>
<accession>B7ZBE3</accession>
<accession>O60289</accession>
<accession>Q2TAN8</accession>
<accession>Q5W1B5</accession>
<accession>Q86TK0</accession>
<accession>Q8N4U8</accession>
<accession>Q8N8C1</accession>
<accession>Q8WU14</accession>